<gene>
    <name evidence="5 6" type="primary">UGD4</name>
    <name evidence="4" type="synonym">UGD1</name>
    <name evidence="9" type="ordered locus">At5g39320</name>
    <name evidence="10" type="ORF">K3K3.170</name>
</gene>
<name>UGDH4_ARATH</name>
<reference key="1">
    <citation type="journal article" date="1998" name="DNA Res.">
        <title>Structural analysis of Arabidopsis thaliana chromosome 5. IV. Sequence features of the regions of 1,456,315 bp covered by nineteen physically assigned P1 and TAC clones.</title>
        <authorList>
            <person name="Sato S."/>
            <person name="Kaneko T."/>
            <person name="Kotani H."/>
            <person name="Nakamura Y."/>
            <person name="Asamizu E."/>
            <person name="Miyajima N."/>
            <person name="Tabata S."/>
        </authorList>
    </citation>
    <scope>NUCLEOTIDE SEQUENCE [LARGE SCALE GENOMIC DNA]</scope>
    <source>
        <strain>cv. Columbia</strain>
    </source>
</reference>
<reference key="2">
    <citation type="journal article" date="1998" name="DNA Res.">
        <title>Structural analysis of Arabidopsis thaliana chromosome 5. V. Sequence features of the regions of 1,381,565 bp covered by twenty one physically assigned P1 and TAC clones.</title>
        <authorList>
            <person name="Kaneko T."/>
            <person name="Kotani H."/>
            <person name="Nakamura Y."/>
            <person name="Sato S."/>
            <person name="Asamizu E."/>
            <person name="Miyajima N."/>
            <person name="Tabata S."/>
        </authorList>
    </citation>
    <scope>NUCLEOTIDE SEQUENCE [LARGE SCALE GENOMIC DNA]</scope>
    <source>
        <strain>cv. Columbia</strain>
    </source>
</reference>
<reference key="3">
    <citation type="journal article" date="2017" name="Plant J.">
        <title>Araport11: a complete reannotation of the Arabidopsis thaliana reference genome.</title>
        <authorList>
            <person name="Cheng C.Y."/>
            <person name="Krishnakumar V."/>
            <person name="Chan A.P."/>
            <person name="Thibaud-Nissen F."/>
            <person name="Schobel S."/>
            <person name="Town C.D."/>
        </authorList>
    </citation>
    <scope>GENOME REANNOTATION</scope>
    <source>
        <strain>cv. Columbia</strain>
    </source>
</reference>
<reference key="4">
    <citation type="journal article" date="2003" name="Science">
        <title>Empirical analysis of transcriptional activity in the Arabidopsis genome.</title>
        <authorList>
            <person name="Yamada K."/>
            <person name="Lim J."/>
            <person name="Dale J.M."/>
            <person name="Chen H."/>
            <person name="Shinn P."/>
            <person name="Palm C.J."/>
            <person name="Southwick A.M."/>
            <person name="Wu H.C."/>
            <person name="Kim C.J."/>
            <person name="Nguyen M."/>
            <person name="Pham P.K."/>
            <person name="Cheuk R.F."/>
            <person name="Karlin-Newmann G."/>
            <person name="Liu S.X."/>
            <person name="Lam B."/>
            <person name="Sakano H."/>
            <person name="Wu T."/>
            <person name="Yu G."/>
            <person name="Miranda M."/>
            <person name="Quach H.L."/>
            <person name="Tripp M."/>
            <person name="Chang C.H."/>
            <person name="Lee J.M."/>
            <person name="Toriumi M.J."/>
            <person name="Chan M.M."/>
            <person name="Tang C.C."/>
            <person name="Onodera C.S."/>
            <person name="Deng J.M."/>
            <person name="Akiyama K."/>
            <person name="Ansari Y."/>
            <person name="Arakawa T."/>
            <person name="Banh J."/>
            <person name="Banno F."/>
            <person name="Bowser L."/>
            <person name="Brooks S.Y."/>
            <person name="Carninci P."/>
            <person name="Chao Q."/>
            <person name="Choy N."/>
            <person name="Enju A."/>
            <person name="Goldsmith A.D."/>
            <person name="Gurjal M."/>
            <person name="Hansen N.F."/>
            <person name="Hayashizaki Y."/>
            <person name="Johnson-Hopson C."/>
            <person name="Hsuan V.W."/>
            <person name="Iida K."/>
            <person name="Karnes M."/>
            <person name="Khan S."/>
            <person name="Koesema E."/>
            <person name="Ishida J."/>
            <person name="Jiang P.X."/>
            <person name="Jones T."/>
            <person name="Kawai J."/>
            <person name="Kamiya A."/>
            <person name="Meyers C."/>
            <person name="Nakajima M."/>
            <person name="Narusaka M."/>
            <person name="Seki M."/>
            <person name="Sakurai T."/>
            <person name="Satou M."/>
            <person name="Tamse R."/>
            <person name="Vaysberg M."/>
            <person name="Wallender E.K."/>
            <person name="Wong C."/>
            <person name="Yamamura Y."/>
            <person name="Yuan S."/>
            <person name="Shinozaki K."/>
            <person name="Davis R.W."/>
            <person name="Theologis A."/>
            <person name="Ecker J.R."/>
        </authorList>
    </citation>
    <scope>NUCLEOTIDE SEQUENCE [LARGE SCALE MRNA]</scope>
    <source>
        <strain>cv. Columbia</strain>
    </source>
</reference>
<reference key="5">
    <citation type="journal article" date="2001" name="Plant Mol. Biol.">
        <title>Molecular genetics of nucleotide sugar interconversion pathways in plants.</title>
        <authorList>
            <person name="Reiter W.-D."/>
            <person name="Vanzin G.F."/>
        </authorList>
    </citation>
    <scope>GENE FAMILY</scope>
</reference>
<reference key="6">
    <citation type="journal article" date="2004" name="Curr. Opin. Plant Biol.">
        <title>Nucleotide sugar interconversions and cell wall biosynthesis: how to bring the inside to the outside.</title>
        <authorList>
            <person name="Seifert G.J."/>
        </authorList>
    </citation>
    <scope>REVIEW</scope>
</reference>
<reference key="7">
    <citation type="journal article" date="2007" name="J. Exp. Bot.">
        <title>Genome-wide analysis of the UDP-glucose dehydrogenase gene family in Arabidopsis, a key enzyme for matrix polysaccharides in cell walls.</title>
        <authorList>
            <person name="Klinghammer M."/>
            <person name="Tenhaken R."/>
        </authorList>
    </citation>
    <scope>FUNCTION</scope>
    <scope>GENE FAMILY</scope>
    <scope>NOMENCLATURE</scope>
    <scope>DEVELOPMENTAL STAGE</scope>
    <scope>BIOPHYSICOCHEMICAL PROPERTIES</scope>
    <scope>CATALYTIC ACTIVITY</scope>
    <scope>PATHWAY</scope>
    <scope>ACTIVITY REGULATION</scope>
    <source>
        <strain>cv. Columbia</strain>
    </source>
</reference>
<reference key="8">
    <citation type="journal article" date="2012" name="PLoS ONE">
        <title>Cell wall ingrowths in nematode induced syncytia require UGD2 and UGD3.</title>
        <authorList>
            <person name="Siddique S."/>
            <person name="Sobczak M."/>
            <person name="Tenhaken R."/>
            <person name="Grundler F.M."/>
            <person name="Bohlmann H."/>
        </authorList>
    </citation>
    <scope>DISRUPTION PHENOTYPE</scope>
    <scope>INDUCTION</scope>
    <scope>PATHWAY</scope>
    <source>
        <strain>cv. Columbia</strain>
    </source>
</reference>
<dbReference type="EC" id="1.1.1.22" evidence="2"/>
<dbReference type="EMBL" id="AB009054">
    <property type="protein sequence ID" value="BAB11006.1"/>
    <property type="molecule type" value="Genomic_DNA"/>
</dbReference>
<dbReference type="EMBL" id="AB010694">
    <property type="protein sequence ID" value="BAB11006.1"/>
    <property type="status" value="JOINED"/>
    <property type="molecule type" value="Genomic_DNA"/>
</dbReference>
<dbReference type="EMBL" id="CP002688">
    <property type="protein sequence ID" value="AED94419.1"/>
    <property type="molecule type" value="Genomic_DNA"/>
</dbReference>
<dbReference type="EMBL" id="BT006380">
    <property type="protein sequence ID" value="AAP21188.1"/>
    <property type="molecule type" value="mRNA"/>
</dbReference>
<dbReference type="RefSeq" id="NP_198748.1">
    <property type="nucleotide sequence ID" value="NM_123294.4"/>
</dbReference>
<dbReference type="SMR" id="Q9FM01"/>
<dbReference type="BioGRID" id="19179">
    <property type="interactions" value="1"/>
</dbReference>
<dbReference type="FunCoup" id="Q9FM01">
    <property type="interactions" value="2525"/>
</dbReference>
<dbReference type="IntAct" id="Q9FM01">
    <property type="interactions" value="1"/>
</dbReference>
<dbReference type="STRING" id="3702.Q9FM01"/>
<dbReference type="iPTMnet" id="Q9FM01"/>
<dbReference type="PaxDb" id="3702-AT5G39320.1"/>
<dbReference type="ProteomicsDB" id="245257"/>
<dbReference type="EnsemblPlants" id="AT5G39320.1">
    <property type="protein sequence ID" value="AT5G39320.1"/>
    <property type="gene ID" value="AT5G39320"/>
</dbReference>
<dbReference type="GeneID" id="833928"/>
<dbReference type="Gramene" id="AT5G39320.1">
    <property type="protein sequence ID" value="AT5G39320.1"/>
    <property type="gene ID" value="AT5G39320"/>
</dbReference>
<dbReference type="KEGG" id="ath:AT5G39320"/>
<dbReference type="Araport" id="AT5G39320"/>
<dbReference type="TAIR" id="AT5G39320">
    <property type="gene designation" value="UDG4"/>
</dbReference>
<dbReference type="eggNOG" id="KOG2666">
    <property type="taxonomic scope" value="Eukaryota"/>
</dbReference>
<dbReference type="HOGENOM" id="CLU_023810_7_0_1"/>
<dbReference type="InParanoid" id="Q9FM01"/>
<dbReference type="OMA" id="IMEAHRP"/>
<dbReference type="OrthoDB" id="5059218at2759"/>
<dbReference type="PhylomeDB" id="Q9FM01"/>
<dbReference type="BioCyc" id="ARA:AT5G39320-MONOMER"/>
<dbReference type="BRENDA" id="1.1.1.22">
    <property type="organism ID" value="399"/>
</dbReference>
<dbReference type="SABIO-RK" id="Q9FM01"/>
<dbReference type="UniPathway" id="UPA00038">
    <property type="reaction ID" value="UER00491"/>
</dbReference>
<dbReference type="CD-CODE" id="4299E36E">
    <property type="entry name" value="Nucleolus"/>
</dbReference>
<dbReference type="PRO" id="PR:Q9FM01"/>
<dbReference type="Proteomes" id="UP000006548">
    <property type="component" value="Chromosome 5"/>
</dbReference>
<dbReference type="ExpressionAtlas" id="Q9FM01">
    <property type="expression patterns" value="baseline and differential"/>
</dbReference>
<dbReference type="GO" id="GO:0051287">
    <property type="term" value="F:NAD binding"/>
    <property type="evidence" value="ECO:0007669"/>
    <property type="project" value="InterPro"/>
</dbReference>
<dbReference type="GO" id="GO:0003979">
    <property type="term" value="F:UDP-glucose 6-dehydrogenase activity"/>
    <property type="evidence" value="ECO:0000314"/>
    <property type="project" value="UniProtKB"/>
</dbReference>
<dbReference type="GO" id="GO:0006065">
    <property type="term" value="P:UDP-glucuronate biosynthetic process"/>
    <property type="evidence" value="ECO:0000314"/>
    <property type="project" value="UniProtKB"/>
</dbReference>
<dbReference type="FunFam" id="1.20.5.100:FF:000001">
    <property type="entry name" value="UDP-glucose 6-dehydrogenase"/>
    <property type="match status" value="1"/>
</dbReference>
<dbReference type="FunFam" id="3.40.50.720:FF:000032">
    <property type="entry name" value="UDP-glucose 6-dehydrogenase"/>
    <property type="match status" value="1"/>
</dbReference>
<dbReference type="FunFam" id="3.40.50.720:FF:000089">
    <property type="entry name" value="UDP-glucose 6-dehydrogenase"/>
    <property type="match status" value="1"/>
</dbReference>
<dbReference type="Gene3D" id="1.20.5.100">
    <property type="entry name" value="Cytochrome c1, transmembrane anchor, C-terminal"/>
    <property type="match status" value="1"/>
</dbReference>
<dbReference type="Gene3D" id="3.40.50.720">
    <property type="entry name" value="NAD(P)-binding Rossmann-like Domain"/>
    <property type="match status" value="2"/>
</dbReference>
<dbReference type="InterPro" id="IPR008927">
    <property type="entry name" value="6-PGluconate_DH-like_C_sf"/>
</dbReference>
<dbReference type="InterPro" id="IPR036291">
    <property type="entry name" value="NAD(P)-bd_dom_sf"/>
</dbReference>
<dbReference type="InterPro" id="IPR017476">
    <property type="entry name" value="UDP-Glc/GDP-Man"/>
</dbReference>
<dbReference type="InterPro" id="IPR014027">
    <property type="entry name" value="UDP-Glc/GDP-Man_DH_C"/>
</dbReference>
<dbReference type="InterPro" id="IPR036220">
    <property type="entry name" value="UDP-Glc/GDP-Man_DH_C_sf"/>
</dbReference>
<dbReference type="InterPro" id="IPR014026">
    <property type="entry name" value="UDP-Glc/GDP-Man_DH_dimer"/>
</dbReference>
<dbReference type="InterPro" id="IPR001732">
    <property type="entry name" value="UDP-Glc/GDP-Man_DH_N"/>
</dbReference>
<dbReference type="InterPro" id="IPR028356">
    <property type="entry name" value="UDPglc_DH_euk"/>
</dbReference>
<dbReference type="NCBIfam" id="TIGR03026">
    <property type="entry name" value="NDP-sugDHase"/>
    <property type="match status" value="1"/>
</dbReference>
<dbReference type="PANTHER" id="PTHR11374:SF48">
    <property type="entry name" value="UDP-GLUCOSE 6-DEHYDROGENASE 4"/>
    <property type="match status" value="1"/>
</dbReference>
<dbReference type="PANTHER" id="PTHR11374">
    <property type="entry name" value="UDP-GLUCOSE DEHYDROGENASE/UDP-MANNAC DEHYDROGENASE"/>
    <property type="match status" value="1"/>
</dbReference>
<dbReference type="Pfam" id="PF00984">
    <property type="entry name" value="UDPG_MGDP_dh"/>
    <property type="match status" value="1"/>
</dbReference>
<dbReference type="Pfam" id="PF03720">
    <property type="entry name" value="UDPG_MGDP_dh_C"/>
    <property type="match status" value="1"/>
</dbReference>
<dbReference type="Pfam" id="PF03721">
    <property type="entry name" value="UDPG_MGDP_dh_N"/>
    <property type="match status" value="1"/>
</dbReference>
<dbReference type="PIRSF" id="PIRSF500133">
    <property type="entry name" value="UDPglc_DH_euk"/>
    <property type="match status" value="1"/>
</dbReference>
<dbReference type="PIRSF" id="PIRSF000124">
    <property type="entry name" value="UDPglc_GDPman_dh"/>
    <property type="match status" value="1"/>
</dbReference>
<dbReference type="SMART" id="SM00984">
    <property type="entry name" value="UDPG_MGDP_dh_C"/>
    <property type="match status" value="1"/>
</dbReference>
<dbReference type="SUPFAM" id="SSF48179">
    <property type="entry name" value="6-phosphogluconate dehydrogenase C-terminal domain-like"/>
    <property type="match status" value="1"/>
</dbReference>
<dbReference type="SUPFAM" id="SSF51735">
    <property type="entry name" value="NAD(P)-binding Rossmann-fold domains"/>
    <property type="match status" value="1"/>
</dbReference>
<dbReference type="SUPFAM" id="SSF52413">
    <property type="entry name" value="UDP-glucose/GDP-mannose dehydrogenase C-terminal domain"/>
    <property type="match status" value="1"/>
</dbReference>
<evidence type="ECO:0000250" key="1">
    <source>
        <dbReference type="UniProtKB" id="P0C0F4"/>
    </source>
</evidence>
<evidence type="ECO:0000269" key="2">
    <source>
    </source>
</evidence>
<evidence type="ECO:0000269" key="3">
    <source>
    </source>
</evidence>
<evidence type="ECO:0000303" key="4">
    <source>
    </source>
</evidence>
<evidence type="ECO:0000303" key="5">
    <source>
    </source>
</evidence>
<evidence type="ECO:0000303" key="6">
    <source>
    </source>
</evidence>
<evidence type="ECO:0000305" key="7"/>
<evidence type="ECO:0000305" key="8">
    <source>
    </source>
</evidence>
<evidence type="ECO:0000312" key="9">
    <source>
        <dbReference type="Araport" id="AT5G39320"/>
    </source>
</evidence>
<evidence type="ECO:0000312" key="10">
    <source>
        <dbReference type="EMBL" id="BAB11006.1"/>
    </source>
</evidence>
<accession>Q9FM01</accession>
<accession>Q84MD5</accession>
<organism>
    <name type="scientific">Arabidopsis thaliana</name>
    <name type="common">Mouse-ear cress</name>
    <dbReference type="NCBI Taxonomy" id="3702"/>
    <lineage>
        <taxon>Eukaryota</taxon>
        <taxon>Viridiplantae</taxon>
        <taxon>Streptophyta</taxon>
        <taxon>Embryophyta</taxon>
        <taxon>Tracheophyta</taxon>
        <taxon>Spermatophyta</taxon>
        <taxon>Magnoliopsida</taxon>
        <taxon>eudicotyledons</taxon>
        <taxon>Gunneridae</taxon>
        <taxon>Pentapetalae</taxon>
        <taxon>rosids</taxon>
        <taxon>malvids</taxon>
        <taxon>Brassicales</taxon>
        <taxon>Brassicaceae</taxon>
        <taxon>Camelineae</taxon>
        <taxon>Arabidopsis</taxon>
    </lineage>
</organism>
<sequence length="480" mass="53097">MVKICCIGAGYVGGPTMAVIALKCPDIEVAVVDISVPRINAWNSDQLPIYEPGLDDIVKQCRGKNLFFSTDVEKHVREADIVFVSVNTPTKTTGLGAGKAADLTYWESAARMIADVSVSDKIVVEKSTVPVKTAEAIEKILMHNSKGIKFQILSNPEFLAEGTAIADLFNPDRVLIGGRETPEGFKAVQTLKEVYANWVPEGQIITTNLWSAELSKLAANAFLAQRISSVNAMSALCESTGADVTQVSYAVGTDSRIGSKFLNASVGFGGSCFQKDILNLVYICQCNGLPEVAEYWKQVIKINDYQKNRFVNRIVSSMFNTVSNKKVAILGFAFKKDTGDTRETPAIDVCKGLLGDKAQISIYDPQVTEEQIQRDLSMKKFDWDHPLHLQPMSPTTVKQVSVTWDAYEATKDAHAVCVLTEWDEFKSLDYQKIFDNMQKPAFIFDGRNIMNVNKLREIGFIVYSIGKPLDPWLKDMPAFV</sequence>
<protein>
    <recommendedName>
        <fullName evidence="5">UDP-glucose 6-dehydrogenase 4</fullName>
        <shortName evidence="5">At-UGD4</shortName>
        <shortName evidence="5">UDP-Glc dehydrogenase 4</shortName>
        <shortName evidence="5">UDP-GlcDH 4</shortName>
        <shortName evidence="5">UDPGDH 4</shortName>
        <ecNumber evidence="2">1.1.1.22</ecNumber>
    </recommendedName>
</protein>
<keyword id="KW-0520">NAD</keyword>
<keyword id="KW-0560">Oxidoreductase</keyword>
<keyword id="KW-1185">Reference proteome</keyword>
<comment type="function">
    <text evidence="2">Involved in the biosynthesis of UDP-glucuronic acid (UDP-GlcA), providing nucleotide sugars for cell-wall polymers.</text>
</comment>
<comment type="catalytic activity">
    <reaction evidence="2">
        <text>UDP-alpha-D-glucose + 2 NAD(+) + H2O = UDP-alpha-D-glucuronate + 2 NADH + 3 H(+)</text>
        <dbReference type="Rhea" id="RHEA:23596"/>
        <dbReference type="ChEBI" id="CHEBI:15377"/>
        <dbReference type="ChEBI" id="CHEBI:15378"/>
        <dbReference type="ChEBI" id="CHEBI:57540"/>
        <dbReference type="ChEBI" id="CHEBI:57945"/>
        <dbReference type="ChEBI" id="CHEBI:58052"/>
        <dbReference type="ChEBI" id="CHEBI:58885"/>
        <dbReference type="EC" id="1.1.1.22"/>
    </reaction>
</comment>
<comment type="activity regulation">
    <text evidence="2">Inhibited by UDP-xylose.</text>
</comment>
<comment type="biophysicochemical properties">
    <kinetics>
        <KM evidence="2">44 uM for NAD(+)</KM>
        <KM evidence="2">171 uM for UDP-glucose</KM>
    </kinetics>
</comment>
<comment type="pathway">
    <text evidence="2 3">Nucleotide-sugar biosynthesis; UDP-alpha-D-glucuronate biosynthesis; UDP-alpha-D-glucuronate from UDP-alpha-D-glucose: step 1/1.</text>
</comment>
<comment type="developmental stage">
    <text evidence="2">Restricted expression to the primary root in young seedlings. Later detected in hypocotyl, leaves and flowers.</text>
</comment>
<comment type="induction">
    <text evidence="3">Specifically down-regulated by H.schachtii (cyst nematodes) in nematode-induced syncytia.</text>
</comment>
<comment type="disruption phenotype">
    <text evidence="3">No visible phenotype.</text>
</comment>
<comment type="similarity">
    <text evidence="7">Belongs to the UDP-glucose/GDP-mannose dehydrogenase family.</text>
</comment>
<comment type="caution">
    <text evidence="8">Was originally assigned as UGD1.</text>
</comment>
<proteinExistence type="evidence at protein level"/>
<feature type="chain" id="PRO_0000312028" description="UDP-glucose 6-dehydrogenase 4">
    <location>
        <begin position="1"/>
        <end position="480"/>
    </location>
</feature>
<feature type="active site" description="Nucleophile" evidence="1">
    <location>
        <position position="272"/>
    </location>
</feature>
<feature type="binding site" evidence="1">
    <location>
        <begin position="3"/>
        <end position="20"/>
    </location>
    <ligand>
        <name>NAD(+)</name>
        <dbReference type="ChEBI" id="CHEBI:57540"/>
    </ligand>
</feature>
<feature type="binding site" evidence="1">
    <location>
        <position position="33"/>
    </location>
    <ligand>
        <name>NAD(+)</name>
        <dbReference type="ChEBI" id="CHEBI:57540"/>
    </ligand>
</feature>
<feature type="binding site" evidence="1">
    <location>
        <position position="38"/>
    </location>
    <ligand>
        <name>NAD(+)</name>
        <dbReference type="ChEBI" id="CHEBI:57540"/>
    </ligand>
</feature>
<feature type="binding site" evidence="1">
    <location>
        <position position="90"/>
    </location>
    <ligand>
        <name>NAD(+)</name>
        <dbReference type="ChEBI" id="CHEBI:57540"/>
    </ligand>
</feature>
<feature type="binding site" evidence="1">
    <location>
        <position position="128"/>
    </location>
    <ligand>
        <name>NAD(+)</name>
        <dbReference type="ChEBI" id="CHEBI:57540"/>
    </ligand>
</feature>
<feature type="binding site" evidence="1">
    <location>
        <begin position="157"/>
        <end position="161"/>
    </location>
    <ligand>
        <name>substrate</name>
    </ligand>
</feature>
<feature type="binding site" evidence="1">
    <location>
        <position position="161"/>
    </location>
    <ligand>
        <name>NAD(+)</name>
        <dbReference type="ChEBI" id="CHEBI:57540"/>
    </ligand>
</feature>
<feature type="binding site" evidence="1">
    <location>
        <begin position="216"/>
        <end position="223"/>
    </location>
    <ligand>
        <name>substrate</name>
    </ligand>
</feature>
<feature type="binding site" evidence="1">
    <location>
        <position position="216"/>
    </location>
    <ligand>
        <name>substrate</name>
    </ligand>
</feature>
<feature type="binding site" evidence="1">
    <location>
        <begin position="256"/>
        <end position="269"/>
    </location>
    <ligand>
        <name>substrate</name>
    </ligand>
</feature>
<feature type="binding site" evidence="1">
    <location>
        <position position="269"/>
    </location>
    <ligand>
        <name>substrate</name>
    </ligand>
</feature>
<feature type="binding site" evidence="1">
    <location>
        <position position="275"/>
    </location>
    <ligand>
        <name>NAD(+)</name>
        <dbReference type="ChEBI" id="CHEBI:57540"/>
    </ligand>
</feature>
<feature type="binding site" evidence="1">
    <location>
        <position position="334"/>
    </location>
    <ligand>
        <name>substrate</name>
    </ligand>
</feature>
<feature type="binding site" evidence="1">
    <location>
        <position position="335"/>
    </location>
    <ligand>
        <name>substrate</name>
    </ligand>
</feature>
<feature type="binding site" evidence="1">
    <location>
        <position position="342"/>
    </location>
    <ligand>
        <name>NAD(+)</name>
        <dbReference type="ChEBI" id="CHEBI:57540"/>
    </ligand>
</feature>
<feature type="binding site" evidence="1">
    <location>
        <position position="447"/>
    </location>
    <ligand>
        <name>substrate</name>
    </ligand>
</feature>
<feature type="sequence conflict" description="In Ref. 4; AAP21188." evidence="7" ref="4">
    <location>
        <position position="92"/>
    </location>
</feature>